<proteinExistence type="inferred from homology"/>
<sequence length="41" mass="4481">DDGVEMTEEEVKRGIMDTVKNAAKDLAGQLLDKLKCKITAC</sequence>
<organism>
    <name type="scientific">Lithobates palustris</name>
    <name type="common">Pickerel frog</name>
    <name type="synonym">Rana palustris</name>
    <dbReference type="NCBI Taxonomy" id="298395"/>
    <lineage>
        <taxon>Eukaryota</taxon>
        <taxon>Metazoa</taxon>
        <taxon>Chordata</taxon>
        <taxon>Craniata</taxon>
        <taxon>Vertebrata</taxon>
        <taxon>Euteleostomi</taxon>
        <taxon>Amphibia</taxon>
        <taxon>Batrachia</taxon>
        <taxon>Anura</taxon>
        <taxon>Neobatrachia</taxon>
        <taxon>Ranoidea</taxon>
        <taxon>Ranidae</taxon>
        <taxon>Lithobates</taxon>
    </lineage>
</organism>
<keyword id="KW-0878">Amphibian defense peptide</keyword>
<keyword id="KW-0044">Antibiotic</keyword>
<keyword id="KW-0929">Antimicrobial</keyword>
<keyword id="KW-0165">Cleavage on pair of basic residues</keyword>
<keyword id="KW-1015">Disulfide bond</keyword>
<keyword id="KW-0964">Secreted</keyword>
<accession>D3UA80</accession>
<name>RN2G_LITPA</name>
<feature type="propeptide" id="PRO_0000413848" evidence="3">
    <location>
        <begin position="1" status="less than"/>
        <end position="11"/>
    </location>
</feature>
<feature type="peptide" id="PRO_5000578146" description="Ranatuerin-2PLg" evidence="2">
    <location>
        <begin position="14"/>
        <end position="41"/>
    </location>
</feature>
<feature type="disulfide bond" evidence="1">
    <location>
        <begin position="36"/>
        <end position="41"/>
    </location>
</feature>
<feature type="non-terminal residue" evidence="4">
    <location>
        <position position="1"/>
    </location>
</feature>
<reference evidence="4" key="1">
    <citation type="journal article" date="2010" name="Immunogenetics">
        <title>A revised leopard frog phylogeny allows a more detailed examination of adaptive evolution at ranatuerin-2 antimicrobial peptide loci.</title>
        <authorList>
            <person name="Tennessen J.A."/>
            <person name="Blouin M.S."/>
        </authorList>
    </citation>
    <scope>NUCLEOTIDE SEQUENCE [GENOMIC DNA]</scope>
</reference>
<comment type="function">
    <text evidence="2">Antimicrobial peptide.</text>
</comment>
<comment type="subcellular location">
    <subcellularLocation>
        <location evidence="2">Secreted</location>
    </subcellularLocation>
</comment>
<comment type="similarity">
    <text evidence="3">Belongs to the frog skin active peptide (FSAP) family. Ranatuerin subfamily.</text>
</comment>
<protein>
    <recommendedName>
        <fullName evidence="4">Ranatuerin-2PLg</fullName>
    </recommendedName>
</protein>
<dbReference type="EMBL" id="FJ845479">
    <property type="protein sequence ID" value="ACZ44727.1"/>
    <property type="molecule type" value="Genomic_DNA"/>
</dbReference>
<dbReference type="SMR" id="D3UA80"/>
<dbReference type="GO" id="GO:0005576">
    <property type="term" value="C:extracellular region"/>
    <property type="evidence" value="ECO:0007669"/>
    <property type="project" value="UniProtKB-SubCell"/>
</dbReference>
<dbReference type="GO" id="GO:0050829">
    <property type="term" value="P:defense response to Gram-negative bacterium"/>
    <property type="evidence" value="ECO:0007669"/>
    <property type="project" value="UniProtKB-ARBA"/>
</dbReference>
<dbReference type="InterPro" id="IPR012521">
    <property type="entry name" value="Antimicrobial_frog_2"/>
</dbReference>
<dbReference type="Pfam" id="PF08023">
    <property type="entry name" value="Antimicrobial_2"/>
    <property type="match status" value="1"/>
</dbReference>
<evidence type="ECO:0000250" key="1">
    <source>
        <dbReference type="UniProtKB" id="Q1JS92"/>
    </source>
</evidence>
<evidence type="ECO:0000250" key="2">
    <source>
        <dbReference type="UniProtKB" id="Q8QFQ4"/>
    </source>
</evidence>
<evidence type="ECO:0000255" key="3"/>
<evidence type="ECO:0000312" key="4">
    <source>
        <dbReference type="EMBL" id="ACZ44727.1"/>
    </source>
</evidence>